<gene>
    <name type="primary">PHC3</name>
    <name type="synonym">EDR3</name>
    <name type="synonym">PH3</name>
</gene>
<name>PHC3_HUMAN</name>
<feature type="chain" id="PRO_0000076290" description="Polyhomeotic-like protein 3">
    <location>
        <begin position="1"/>
        <end position="983"/>
    </location>
</feature>
<feature type="domain" description="SAM" evidence="1">
    <location>
        <begin position="919"/>
        <end position="983"/>
    </location>
</feature>
<feature type="zinc finger region" description="FCS-type" evidence="2">
    <location>
        <begin position="776"/>
        <end position="810"/>
    </location>
</feature>
<feature type="region of interest" description="Disordered" evidence="3">
    <location>
        <begin position="1"/>
        <end position="34"/>
    </location>
</feature>
<feature type="region of interest" description="Disordered" evidence="3">
    <location>
        <begin position="103"/>
        <end position="149"/>
    </location>
</feature>
<feature type="region of interest" description="Disordered" evidence="3">
    <location>
        <begin position="225"/>
        <end position="283"/>
    </location>
</feature>
<feature type="region of interest" description="Disordered" evidence="3">
    <location>
        <begin position="313"/>
        <end position="332"/>
    </location>
</feature>
<feature type="region of interest" description="Disordered" evidence="3">
    <location>
        <begin position="339"/>
        <end position="410"/>
    </location>
</feature>
<feature type="region of interest" description="Disordered" evidence="3">
    <location>
        <begin position="477"/>
        <end position="509"/>
    </location>
</feature>
<feature type="region of interest" description="Disordered" evidence="3">
    <location>
        <begin position="601"/>
        <end position="620"/>
    </location>
</feature>
<feature type="region of interest" description="Disordered" evidence="3">
    <location>
        <begin position="827"/>
        <end position="847"/>
    </location>
</feature>
<feature type="region of interest" description="Disordered" evidence="3">
    <location>
        <begin position="864"/>
        <end position="889"/>
    </location>
</feature>
<feature type="short sequence motif" description="HD1">
    <location>
        <begin position="691"/>
        <end position="720"/>
    </location>
</feature>
<feature type="compositionally biased region" description="Low complexity" evidence="3">
    <location>
        <begin position="9"/>
        <end position="29"/>
    </location>
</feature>
<feature type="compositionally biased region" description="Low complexity" evidence="3">
    <location>
        <begin position="103"/>
        <end position="126"/>
    </location>
</feature>
<feature type="compositionally biased region" description="Polar residues" evidence="3">
    <location>
        <begin position="127"/>
        <end position="139"/>
    </location>
</feature>
<feature type="compositionally biased region" description="Low complexity" evidence="3">
    <location>
        <begin position="140"/>
        <end position="149"/>
    </location>
</feature>
<feature type="compositionally biased region" description="Polar residues" evidence="3">
    <location>
        <begin position="225"/>
        <end position="257"/>
    </location>
</feature>
<feature type="compositionally biased region" description="Basic and acidic residues" evidence="3">
    <location>
        <begin position="258"/>
        <end position="271"/>
    </location>
</feature>
<feature type="compositionally biased region" description="Polar residues" evidence="3">
    <location>
        <begin position="274"/>
        <end position="283"/>
    </location>
</feature>
<feature type="compositionally biased region" description="Polar residues" evidence="3">
    <location>
        <begin position="365"/>
        <end position="383"/>
    </location>
</feature>
<feature type="compositionally biased region" description="Low complexity" evidence="3">
    <location>
        <begin position="384"/>
        <end position="398"/>
    </location>
</feature>
<feature type="compositionally biased region" description="Polar residues" evidence="3">
    <location>
        <begin position="477"/>
        <end position="489"/>
    </location>
</feature>
<feature type="compositionally biased region" description="Low complexity" evidence="3">
    <location>
        <begin position="490"/>
        <end position="506"/>
    </location>
</feature>
<feature type="binding site" evidence="2">
    <location>
        <position position="785"/>
    </location>
    <ligand>
        <name>Zn(2+)</name>
        <dbReference type="ChEBI" id="CHEBI:29105"/>
    </ligand>
</feature>
<feature type="binding site" evidence="2">
    <location>
        <position position="788"/>
    </location>
    <ligand>
        <name>Zn(2+)</name>
        <dbReference type="ChEBI" id="CHEBI:29105"/>
    </ligand>
</feature>
<feature type="binding site" evidence="2">
    <location>
        <position position="804"/>
    </location>
    <ligand>
        <name>Zn(2+)</name>
        <dbReference type="ChEBI" id="CHEBI:29105"/>
    </ligand>
</feature>
<feature type="binding site" evidence="2">
    <location>
        <position position="808"/>
    </location>
    <ligand>
        <name>Zn(2+)</name>
        <dbReference type="ChEBI" id="CHEBI:29105"/>
    </ligand>
</feature>
<feature type="modified residue" description="Phosphoserine" evidence="15 16">
    <location>
        <position position="263"/>
    </location>
</feature>
<feature type="modified residue" description="Phosphoserine" evidence="15 16">
    <location>
        <position position="272"/>
    </location>
</feature>
<feature type="modified residue" description="Phosphoserine" evidence="13 16">
    <location>
        <position position="315"/>
    </location>
</feature>
<feature type="modified residue" description="Phosphothreonine" evidence="12 13 14 15 16 17">
    <location>
        <position position="609"/>
    </location>
</feature>
<feature type="modified residue" description="Phosphothreonine" evidence="17">
    <location>
        <position position="614"/>
    </location>
</feature>
<feature type="modified residue" description="Phosphoserine" evidence="13 14 15 16">
    <location>
        <position position="616"/>
    </location>
</feature>
<feature type="modified residue" description="Phosphoserine" evidence="13 17">
    <location>
        <position position="761"/>
    </location>
</feature>
<feature type="modified residue" description="Phosphoserine" evidence="13 14 17">
    <location>
        <position position="762"/>
    </location>
</feature>
<feature type="cross-link" description="Glycyl lysine isopeptide (Lys-Gly) (interchain with G-Cter in SUMO2)" evidence="18">
    <location>
        <position position="691"/>
    </location>
</feature>
<feature type="cross-link" description="Glycyl lysine isopeptide (Lys-Gly) (interchain with G-Cter in SUMO2)" evidence="18">
    <location>
        <position position="732"/>
    </location>
</feature>
<feature type="cross-link" description="Glycyl lysine isopeptide (Lys-Gly) (interchain with G-Cter in SUMO2)" evidence="18">
    <location>
        <position position="810"/>
    </location>
</feature>
<feature type="splice variant" id="VSP_016763" description="In isoform 3, isoform 5 and isoform 7." evidence="7 8 9">
    <original>M</original>
    <variation>MAEAEFKDHSTAM</variation>
    <location>
        <position position="1"/>
    </location>
</feature>
<feature type="splice variant" id="VSP_016764" description="In isoform 4 and isoform 6." evidence="7 8">
    <location>
        <begin position="48"/>
        <end position="51"/>
    </location>
</feature>
<feature type="splice variant" id="VSP_016765" description="In isoform 2." evidence="10">
    <location>
        <begin position="123"/>
        <end position="141"/>
    </location>
</feature>
<feature type="splice variant" id="VSP_016766" description="In isoform 5 and isoform 6." evidence="7 8">
    <original>INLSTSPTPAQLI</original>
    <variation>VSSLNFFFLDLKF</variation>
    <location>
        <begin position="127"/>
        <end position="139"/>
    </location>
</feature>
<feature type="splice variant" id="VSP_016767" description="In isoform 5 and isoform 6." evidence="7 8">
    <location>
        <begin position="140"/>
        <end position="983"/>
    </location>
</feature>
<feature type="splice variant" id="VSP_016768" description="In isoform 4." evidence="7">
    <original>LIFTPATTVAA</original>
    <variation>VRYELPNFFSV</variation>
    <location>
        <begin position="180"/>
        <end position="190"/>
    </location>
</feature>
<feature type="splice variant" id="VSP_016769" description="In isoform 4." evidence="7">
    <location>
        <begin position="191"/>
        <end position="983"/>
    </location>
</feature>
<feature type="splice variant" id="VSP_016770" description="In isoform 3." evidence="9">
    <original>ASYSPIQPHSLIKHQQIPLHSPPSKVS</original>
    <variation>GGIKLLLKIVVLFIFLADRAKQRMFMT</variation>
    <location>
        <begin position="295"/>
        <end position="321"/>
    </location>
</feature>
<feature type="splice variant" id="VSP_016771" description="In isoform 3." evidence="9">
    <location>
        <begin position="322"/>
        <end position="983"/>
    </location>
</feature>
<feature type="sequence conflict" description="In Ref. 3; AAM46139." evidence="11" ref="3">
    <original>I</original>
    <variation>F</variation>
    <location>
        <position position="50"/>
    </location>
</feature>
<feature type="sequence conflict" description="In Ref. 2; AAM51781." evidence="11" ref="2">
    <original>A</original>
    <variation>S</variation>
    <location>
        <position position="53"/>
    </location>
</feature>
<feature type="sequence conflict" description="In Ref. 5; EF560717." evidence="11" ref="5">
    <original>Q</original>
    <variation>R</variation>
    <location>
        <position position="310"/>
    </location>
</feature>
<feature type="sequence conflict" description="In Ref. 5; EF560717." evidence="11" ref="5">
    <original>N</original>
    <variation>D</variation>
    <location>
        <position position="435"/>
    </location>
</feature>
<feature type="helix" evidence="19">
    <location>
        <begin position="916"/>
        <end position="918"/>
    </location>
</feature>
<feature type="helix" evidence="19">
    <location>
        <begin position="921"/>
        <end position="929"/>
    </location>
</feature>
<feature type="helix" evidence="19">
    <location>
        <begin position="935"/>
        <end position="943"/>
    </location>
</feature>
<feature type="helix" evidence="19">
    <location>
        <begin position="948"/>
        <end position="952"/>
    </location>
</feature>
<feature type="helix" evidence="19">
    <location>
        <begin position="956"/>
        <end position="959"/>
    </location>
</feature>
<feature type="turn" evidence="19">
    <location>
        <begin position="960"/>
        <end position="962"/>
    </location>
</feature>
<feature type="helix" evidence="19">
    <location>
        <begin position="967"/>
        <end position="982"/>
    </location>
</feature>
<protein>
    <recommendedName>
        <fullName>Polyhomeotic-like protein 3</fullName>
    </recommendedName>
    <alternativeName>
        <fullName>Early development regulatory protein 3</fullName>
    </alternativeName>
    <alternativeName>
        <fullName>Homolog of polyhomeotic 3</fullName>
        <shortName>hPH3</shortName>
    </alternativeName>
</protein>
<evidence type="ECO:0000255" key="1">
    <source>
        <dbReference type="PROSITE-ProRule" id="PRU00184"/>
    </source>
</evidence>
<evidence type="ECO:0000255" key="2">
    <source>
        <dbReference type="PROSITE-ProRule" id="PRU00367"/>
    </source>
</evidence>
<evidence type="ECO:0000256" key="3">
    <source>
        <dbReference type="SAM" id="MobiDB-lite"/>
    </source>
</evidence>
<evidence type="ECO:0000269" key="4">
    <source>
    </source>
</evidence>
<evidence type="ECO:0000269" key="5">
    <source>
    </source>
</evidence>
<evidence type="ECO:0000269" key="6">
    <source>
    </source>
</evidence>
<evidence type="ECO:0000303" key="7">
    <source>
    </source>
</evidence>
<evidence type="ECO:0000303" key="8">
    <source>
    </source>
</evidence>
<evidence type="ECO:0000303" key="9">
    <source>
    </source>
</evidence>
<evidence type="ECO:0000303" key="10">
    <source ref="3"/>
</evidence>
<evidence type="ECO:0000305" key="11"/>
<evidence type="ECO:0007744" key="12">
    <source>
    </source>
</evidence>
<evidence type="ECO:0007744" key="13">
    <source>
    </source>
</evidence>
<evidence type="ECO:0007744" key="14">
    <source>
    </source>
</evidence>
<evidence type="ECO:0007744" key="15">
    <source>
    </source>
</evidence>
<evidence type="ECO:0007744" key="16">
    <source>
    </source>
</evidence>
<evidence type="ECO:0007744" key="17">
    <source>
    </source>
</evidence>
<evidence type="ECO:0007744" key="18">
    <source>
    </source>
</evidence>
<evidence type="ECO:0007829" key="19">
    <source>
        <dbReference type="PDB" id="4PZO"/>
    </source>
</evidence>
<sequence>MDTEPNPGTSSVSTTTSSTTTTTITTSSSRMQQPQISVYSGSDRHAVQVIQQALHRPPSSAAQYLQQMYAAQQQHLMLHTAALQQQHLSSSQLQSLAAVQASLSSGRPSTSPTGSVTQQSSMSQTSINLSTSPTPAQLISRSQASSSTSGSITQQTMLLGSTSPTLTASQAQMYLRAQMLIFTPATTVAAVQSDIPVVSSSSSSSCQSAATQVQNLTLRSQKLGVLSSSQNGPPKSTSQTQSLTICHNKTTVTSSKISQRDPSPESNKKGESPSLESRSTAVTRTSSIHQLIAPASYSPIQPHSLIKHQQIPLHSPPSKVSHHQLILQQQQQQIQPITLQNSTQDPPPSQHCIPLQNHGLPPAPSNAQSQHCSPIQSHPSPLTVSPNQSQSAQQSVVVSPPPPHSPSQSPTIIIHPQALIQPHPLVSSALQPGPNLQQSTANQVQATAQLNLPSHLPLPASPVVHIGPVQQSALVSPGQQIVSPSHQQYSSLQSSPIPIASPPQMSTSPPAQIPPLPLQSMQSLQVQPEILSQGQVLVQNALVSEEELPAAEALVQLPFQTLPPPQTVAVNLQVQPPAPVDPPVVYQVEDVCEEEMPEESDECVRMDRTPPPPTLSPAAITVGRGEDLTSEHPLLEQVELPAVASVSASVIKSPSDPSHVSVPPPPLLLPAATTRSNSTSMHSSIPSIENKPPQAIVKPQILTHVIEGFVIQEGLEPFPVSRSSLLIEQPVKKRPLLDNQVINSVCVQPELQNNTKHADNSSDTEMEDMIAEETLEEMDSELLKCEFCGKMGYANEFLRSKRFCTMSCAKRYNVSCSKKFALSRWNRKPDNQSLGHRGRRPSGPDGAAREHILRQLPITYPSAEEDLASHEDSVPSAMTTRLRRQSERERERELRDVRIRKMPENSDLLPVAQTEPSIWTVDDVWAFIHSLPGCQDIADEFRAQEIDGQALLLLKEDHLMSAMNIKLGPALKICARINSLKES</sequence>
<reference key="1">
    <citation type="journal article" date="2002" name="Hum. Genet.">
        <title>Identification and characterisation of novel mammalian homologues of Drosophila polyhomeotic permits new insights into relationships between members of the polyhomeotic family.</title>
        <authorList>
            <person name="Tonkin E."/>
            <person name="Hagan D.-M."/>
            <person name="Li W."/>
            <person name="Strachan T."/>
        </authorList>
    </citation>
    <scope>NUCLEOTIDE SEQUENCE [MRNA] (ISOFORM 1)</scope>
</reference>
<reference key="2">
    <citation type="journal article" date="2002" name="Mol. Cell. Biol.">
        <title>The core of the polycomb repressive complex is compositionally and functionally conserved in flies and humans.</title>
        <authorList>
            <person name="Levine S.S."/>
            <person name="Weiss A."/>
            <person name="Erdjument-Bromage H."/>
            <person name="Shao Z."/>
            <person name="Tempst P."/>
            <person name="Kingston R.E."/>
        </authorList>
    </citation>
    <scope>NUCLEOTIDE SEQUENCE [MRNA] (ISOFORM 1)</scope>
    <scope>IDENTIFICATION BY MASS SPECTROMETRY</scope>
    <scope>FUNCTION</scope>
    <scope>IDENTIFICATION IN A PRC1-LIKE HPRC-H COMPLEX WITH BMI1; CBX2; CBX4; CBX8; PHC1; PHC2; RING1 AND RNF2</scope>
    <scope>SUBCELLULAR LOCATION</scope>
</reference>
<reference key="3">
    <citation type="submission" date="2001-05" db="EMBL/GenBank/DDBJ databases">
        <title>EDR3 is a candidate gene for the Cornelia de Lange Syndrome locus.</title>
        <authorList>
            <person name="Hansen M.F."/>
            <person name="Deshpande A.M."/>
            <person name="Nellissery M.J."/>
            <person name="Reveles X."/>
            <person name="Naylor S.L."/>
            <person name="Jackson L.G."/>
            <person name="Leach R.J."/>
        </authorList>
    </citation>
    <scope>NUCLEOTIDE SEQUENCE [MRNA] (ISOFORM 2)</scope>
</reference>
<reference key="4">
    <citation type="journal article" date="2004" name="Nat. Genet.">
        <title>Complete sequencing and characterization of 21,243 full-length human cDNAs.</title>
        <authorList>
            <person name="Ota T."/>
            <person name="Suzuki Y."/>
            <person name="Nishikawa T."/>
            <person name="Otsuki T."/>
            <person name="Sugiyama T."/>
            <person name="Irie R."/>
            <person name="Wakamatsu A."/>
            <person name="Hayashi K."/>
            <person name="Sato H."/>
            <person name="Nagai K."/>
            <person name="Kimura K."/>
            <person name="Makita H."/>
            <person name="Sekine M."/>
            <person name="Obayashi M."/>
            <person name="Nishi T."/>
            <person name="Shibahara T."/>
            <person name="Tanaka T."/>
            <person name="Ishii S."/>
            <person name="Yamamoto J."/>
            <person name="Saito K."/>
            <person name="Kawai Y."/>
            <person name="Isono Y."/>
            <person name="Nakamura Y."/>
            <person name="Nagahari K."/>
            <person name="Murakami K."/>
            <person name="Yasuda T."/>
            <person name="Iwayanagi T."/>
            <person name="Wagatsuma M."/>
            <person name="Shiratori A."/>
            <person name="Sudo H."/>
            <person name="Hosoiri T."/>
            <person name="Kaku Y."/>
            <person name="Kodaira H."/>
            <person name="Kondo H."/>
            <person name="Sugawara M."/>
            <person name="Takahashi M."/>
            <person name="Kanda K."/>
            <person name="Yokoi T."/>
            <person name="Furuya T."/>
            <person name="Kikkawa E."/>
            <person name="Omura Y."/>
            <person name="Abe K."/>
            <person name="Kamihara K."/>
            <person name="Katsuta N."/>
            <person name="Sato K."/>
            <person name="Tanikawa M."/>
            <person name="Yamazaki M."/>
            <person name="Ninomiya K."/>
            <person name="Ishibashi T."/>
            <person name="Yamashita H."/>
            <person name="Murakawa K."/>
            <person name="Fujimori K."/>
            <person name="Tanai H."/>
            <person name="Kimata M."/>
            <person name="Watanabe M."/>
            <person name="Hiraoka S."/>
            <person name="Chiba Y."/>
            <person name="Ishida S."/>
            <person name="Ono Y."/>
            <person name="Takiguchi S."/>
            <person name="Watanabe S."/>
            <person name="Yosida M."/>
            <person name="Hotuta T."/>
            <person name="Kusano J."/>
            <person name="Kanehori K."/>
            <person name="Takahashi-Fujii A."/>
            <person name="Hara H."/>
            <person name="Tanase T.-O."/>
            <person name="Nomura Y."/>
            <person name="Togiya S."/>
            <person name="Komai F."/>
            <person name="Hara R."/>
            <person name="Takeuchi K."/>
            <person name="Arita M."/>
            <person name="Imose N."/>
            <person name="Musashino K."/>
            <person name="Yuuki H."/>
            <person name="Oshima A."/>
            <person name="Sasaki N."/>
            <person name="Aotsuka S."/>
            <person name="Yoshikawa Y."/>
            <person name="Matsunawa H."/>
            <person name="Ichihara T."/>
            <person name="Shiohata N."/>
            <person name="Sano S."/>
            <person name="Moriya S."/>
            <person name="Momiyama H."/>
            <person name="Satoh N."/>
            <person name="Takami S."/>
            <person name="Terashima Y."/>
            <person name="Suzuki O."/>
            <person name="Nakagawa S."/>
            <person name="Senoh A."/>
            <person name="Mizoguchi H."/>
            <person name="Goto Y."/>
            <person name="Shimizu F."/>
            <person name="Wakebe H."/>
            <person name="Hishigaki H."/>
            <person name="Watanabe T."/>
            <person name="Sugiyama A."/>
            <person name="Takemoto M."/>
            <person name="Kawakami B."/>
            <person name="Yamazaki M."/>
            <person name="Watanabe K."/>
            <person name="Kumagai A."/>
            <person name="Itakura S."/>
            <person name="Fukuzumi Y."/>
            <person name="Fujimori Y."/>
            <person name="Komiyama M."/>
            <person name="Tashiro H."/>
            <person name="Tanigami A."/>
            <person name="Fujiwara T."/>
            <person name="Ono T."/>
            <person name="Yamada K."/>
            <person name="Fujii Y."/>
            <person name="Ozaki K."/>
            <person name="Hirao M."/>
            <person name="Ohmori Y."/>
            <person name="Kawabata A."/>
            <person name="Hikiji T."/>
            <person name="Kobatake N."/>
            <person name="Inagaki H."/>
            <person name="Ikema Y."/>
            <person name="Okamoto S."/>
            <person name="Okitani R."/>
            <person name="Kawakami T."/>
            <person name="Noguchi S."/>
            <person name="Itoh T."/>
            <person name="Shigeta K."/>
            <person name="Senba T."/>
            <person name="Matsumura K."/>
            <person name="Nakajima Y."/>
            <person name="Mizuno T."/>
            <person name="Morinaga M."/>
            <person name="Sasaki M."/>
            <person name="Togashi T."/>
            <person name="Oyama M."/>
            <person name="Hata H."/>
            <person name="Watanabe M."/>
            <person name="Komatsu T."/>
            <person name="Mizushima-Sugano J."/>
            <person name="Satoh T."/>
            <person name="Shirai Y."/>
            <person name="Takahashi Y."/>
            <person name="Nakagawa K."/>
            <person name="Okumura K."/>
            <person name="Nagase T."/>
            <person name="Nomura N."/>
            <person name="Kikuchi H."/>
            <person name="Masuho Y."/>
            <person name="Yamashita R."/>
            <person name="Nakai K."/>
            <person name="Yada T."/>
            <person name="Nakamura Y."/>
            <person name="Ohara O."/>
            <person name="Isogai T."/>
            <person name="Sugano S."/>
        </authorList>
    </citation>
    <scope>NUCLEOTIDE SEQUENCE [LARGE SCALE MRNA] (ISOFORMS 4 AND 5)</scope>
</reference>
<reference key="5">
    <citation type="journal article" date="2007" name="BMC Genomics">
        <title>The full-ORF clone resource of the German cDNA consortium.</title>
        <authorList>
            <person name="Bechtel S."/>
            <person name="Rosenfelder H."/>
            <person name="Duda A."/>
            <person name="Schmidt C.P."/>
            <person name="Ernst U."/>
            <person name="Wellenreuther R."/>
            <person name="Mehrle A."/>
            <person name="Schuster C."/>
            <person name="Bahr A."/>
            <person name="Bloecker H."/>
            <person name="Heubner D."/>
            <person name="Hoerlein A."/>
            <person name="Michel G."/>
            <person name="Wedler H."/>
            <person name="Koehrer K."/>
            <person name="Ottenwaelder B."/>
            <person name="Poustka A."/>
            <person name="Wiemann S."/>
            <person name="Schupp I."/>
        </authorList>
    </citation>
    <scope>NUCLEOTIDE SEQUENCE [LARGE SCALE MRNA] (ISOFORMS 3 AND 7)</scope>
    <source>
        <tissue>Adipose tissue</tissue>
        <tissue>Amygdala</tissue>
    </source>
</reference>
<reference key="6">
    <citation type="journal article" date="2006" name="Nature">
        <title>The DNA sequence, annotation and analysis of human chromosome 3.</title>
        <authorList>
            <person name="Muzny D.M."/>
            <person name="Scherer S.E."/>
            <person name="Kaul R."/>
            <person name="Wang J."/>
            <person name="Yu J."/>
            <person name="Sudbrak R."/>
            <person name="Buhay C.J."/>
            <person name="Chen R."/>
            <person name="Cree A."/>
            <person name="Ding Y."/>
            <person name="Dugan-Rocha S."/>
            <person name="Gill R."/>
            <person name="Gunaratne P."/>
            <person name="Harris R.A."/>
            <person name="Hawes A.C."/>
            <person name="Hernandez J."/>
            <person name="Hodgson A.V."/>
            <person name="Hume J."/>
            <person name="Jackson A."/>
            <person name="Khan Z.M."/>
            <person name="Kovar-Smith C."/>
            <person name="Lewis L.R."/>
            <person name="Lozado R.J."/>
            <person name="Metzker M.L."/>
            <person name="Milosavljevic A."/>
            <person name="Miner G.R."/>
            <person name="Morgan M.B."/>
            <person name="Nazareth L.V."/>
            <person name="Scott G."/>
            <person name="Sodergren E."/>
            <person name="Song X.-Z."/>
            <person name="Steffen D."/>
            <person name="Wei S."/>
            <person name="Wheeler D.A."/>
            <person name="Wright M.W."/>
            <person name="Worley K.C."/>
            <person name="Yuan Y."/>
            <person name="Zhang Z."/>
            <person name="Adams C.Q."/>
            <person name="Ansari-Lari M.A."/>
            <person name="Ayele M."/>
            <person name="Brown M.J."/>
            <person name="Chen G."/>
            <person name="Chen Z."/>
            <person name="Clendenning J."/>
            <person name="Clerc-Blankenburg K.P."/>
            <person name="Chen R."/>
            <person name="Chen Z."/>
            <person name="Davis C."/>
            <person name="Delgado O."/>
            <person name="Dinh H.H."/>
            <person name="Dong W."/>
            <person name="Draper H."/>
            <person name="Ernst S."/>
            <person name="Fu G."/>
            <person name="Gonzalez-Garay M.L."/>
            <person name="Garcia D.K."/>
            <person name="Gillett W."/>
            <person name="Gu J."/>
            <person name="Hao B."/>
            <person name="Haugen E."/>
            <person name="Havlak P."/>
            <person name="He X."/>
            <person name="Hennig S."/>
            <person name="Hu S."/>
            <person name="Huang W."/>
            <person name="Jackson L.R."/>
            <person name="Jacob L.S."/>
            <person name="Kelly S.H."/>
            <person name="Kube M."/>
            <person name="Levy R."/>
            <person name="Li Z."/>
            <person name="Liu B."/>
            <person name="Liu J."/>
            <person name="Liu W."/>
            <person name="Lu J."/>
            <person name="Maheshwari M."/>
            <person name="Nguyen B.-V."/>
            <person name="Okwuonu G.O."/>
            <person name="Palmeiri A."/>
            <person name="Pasternak S."/>
            <person name="Perez L.M."/>
            <person name="Phelps K.A."/>
            <person name="Plopper F.J."/>
            <person name="Qiang B."/>
            <person name="Raymond C."/>
            <person name="Rodriguez R."/>
            <person name="Saenphimmachak C."/>
            <person name="Santibanez J."/>
            <person name="Shen H."/>
            <person name="Shen Y."/>
            <person name="Subramanian S."/>
            <person name="Tabor P.E."/>
            <person name="Verduzco D."/>
            <person name="Waldron L."/>
            <person name="Wang J."/>
            <person name="Wang J."/>
            <person name="Wang Q."/>
            <person name="Williams G.A."/>
            <person name="Wong G.K.-S."/>
            <person name="Yao Z."/>
            <person name="Zhang J."/>
            <person name="Zhang X."/>
            <person name="Zhao G."/>
            <person name="Zhou J."/>
            <person name="Zhou Y."/>
            <person name="Nelson D."/>
            <person name="Lehrach H."/>
            <person name="Reinhardt R."/>
            <person name="Naylor S.L."/>
            <person name="Yang H."/>
            <person name="Olson M."/>
            <person name="Weinstock G."/>
            <person name="Gibbs R.A."/>
        </authorList>
    </citation>
    <scope>NUCLEOTIDE SEQUENCE [LARGE SCALE GENOMIC DNA]</scope>
</reference>
<reference key="7">
    <citation type="submission" date="2005-09" db="EMBL/GenBank/DDBJ databases">
        <authorList>
            <person name="Mural R.J."/>
            <person name="Istrail S."/>
            <person name="Sutton G.G."/>
            <person name="Florea L."/>
            <person name="Halpern A.L."/>
            <person name="Mobarry C.M."/>
            <person name="Lippert R."/>
            <person name="Walenz B."/>
            <person name="Shatkay H."/>
            <person name="Dew I."/>
            <person name="Miller J.R."/>
            <person name="Flanigan M.J."/>
            <person name="Edwards N.J."/>
            <person name="Bolanos R."/>
            <person name="Fasulo D."/>
            <person name="Halldorsson B.V."/>
            <person name="Hannenhalli S."/>
            <person name="Turner R."/>
            <person name="Yooseph S."/>
            <person name="Lu F."/>
            <person name="Nusskern D.R."/>
            <person name="Shue B.C."/>
            <person name="Zheng X.H."/>
            <person name="Zhong F."/>
            <person name="Delcher A.L."/>
            <person name="Huson D.H."/>
            <person name="Kravitz S.A."/>
            <person name="Mouchard L."/>
            <person name="Reinert K."/>
            <person name="Remington K.A."/>
            <person name="Clark A.G."/>
            <person name="Waterman M.S."/>
            <person name="Eichler E.E."/>
            <person name="Adams M.D."/>
            <person name="Hunkapiller M.W."/>
            <person name="Myers E.W."/>
            <person name="Venter J.C."/>
        </authorList>
    </citation>
    <scope>NUCLEOTIDE SEQUENCE [LARGE SCALE GENOMIC DNA]</scope>
</reference>
<reference key="8">
    <citation type="journal article" date="2004" name="Genome Res.">
        <title>The status, quality, and expansion of the NIH full-length cDNA project: the Mammalian Gene Collection (MGC).</title>
        <authorList>
            <consortium name="The MGC Project Team"/>
        </authorList>
    </citation>
    <scope>NUCLEOTIDE SEQUENCE [LARGE SCALE MRNA] (ISOFORMS 1; 5 AND 6)</scope>
    <source>
        <tissue>Testis</tissue>
    </source>
</reference>
<reference key="9">
    <citation type="journal article" date="2007" name="Science">
        <title>ATM and ATR substrate analysis reveals extensive protein networks responsive to DNA damage.</title>
        <authorList>
            <person name="Matsuoka S."/>
            <person name="Ballif B.A."/>
            <person name="Smogorzewska A."/>
            <person name="McDonald E.R. III"/>
            <person name="Hurov K.E."/>
            <person name="Luo J."/>
            <person name="Bakalarski C.E."/>
            <person name="Zhao Z."/>
            <person name="Solimini N."/>
            <person name="Lerenthal Y."/>
            <person name="Shiloh Y."/>
            <person name="Gygi S.P."/>
            <person name="Elledge S.J."/>
        </authorList>
    </citation>
    <scope>IDENTIFICATION BY MASS SPECTROMETRY [LARGE SCALE ANALYSIS]</scope>
    <source>
        <tissue>Embryonic kidney</tissue>
    </source>
</reference>
<reference key="10">
    <citation type="journal article" date="2008" name="J. Proteome Res.">
        <title>Combining protein-based IMAC, peptide-based IMAC, and MudPIT for efficient phosphoproteomic analysis.</title>
        <authorList>
            <person name="Cantin G.T."/>
            <person name="Yi W."/>
            <person name="Lu B."/>
            <person name="Park S.K."/>
            <person name="Xu T."/>
            <person name="Lee J.-D."/>
            <person name="Yates J.R. III"/>
        </authorList>
    </citation>
    <scope>PHOSPHORYLATION [LARGE SCALE ANALYSIS] AT THR-609</scope>
    <scope>IDENTIFICATION BY MASS SPECTROMETRY [LARGE SCALE ANALYSIS]</scope>
    <source>
        <tissue>Cervix carcinoma</tissue>
    </source>
</reference>
<reference key="11">
    <citation type="journal article" date="2008" name="Proc. Natl. Acad. Sci. U.S.A.">
        <title>A quantitative atlas of mitotic phosphorylation.</title>
        <authorList>
            <person name="Dephoure N."/>
            <person name="Zhou C."/>
            <person name="Villen J."/>
            <person name="Beausoleil S.A."/>
            <person name="Bakalarski C.E."/>
            <person name="Elledge S.J."/>
            <person name="Gygi S.P."/>
        </authorList>
    </citation>
    <scope>PHOSPHORYLATION [LARGE SCALE ANALYSIS] AT SER-315; THR-609; SER-616; SER-761 AND SER-762</scope>
    <scope>IDENTIFICATION BY MASS SPECTROMETRY [LARGE SCALE ANALYSIS]</scope>
    <source>
        <tissue>Cervix carcinoma</tissue>
    </source>
</reference>
<reference key="12">
    <citation type="journal article" date="2009" name="PLoS ONE">
        <title>Several distinct polycomb complexes regulate and co-localize on the INK4a tumor suppressor locus.</title>
        <authorList>
            <person name="Maertens G.N."/>
            <person name="El Messaoudi-Aubert S."/>
            <person name="Racek T."/>
            <person name="Stock J.K."/>
            <person name="Nicholls J."/>
            <person name="Rodriguez-Niedenfuhr M."/>
            <person name="Gil J."/>
            <person name="Peters G."/>
        </authorList>
    </citation>
    <scope>IDENTIFICATION IN A PRC1-LIKE COMPLEX</scope>
</reference>
<reference key="13">
    <citation type="journal article" date="2009" name="Sci. Signal.">
        <title>Quantitative phosphoproteomic analysis of T cell receptor signaling reveals system-wide modulation of protein-protein interactions.</title>
        <authorList>
            <person name="Mayya V."/>
            <person name="Lundgren D.H."/>
            <person name="Hwang S.-I."/>
            <person name="Rezaul K."/>
            <person name="Wu L."/>
            <person name="Eng J.K."/>
            <person name="Rodionov V."/>
            <person name="Han D.K."/>
        </authorList>
    </citation>
    <scope>PHOSPHORYLATION [LARGE SCALE ANALYSIS] AT THR-609; SER-616 AND SER-762</scope>
    <scope>IDENTIFICATION BY MASS SPECTROMETRY [LARGE SCALE ANALYSIS]</scope>
    <source>
        <tissue>Leukemic T-cell</tissue>
    </source>
</reference>
<reference key="14">
    <citation type="journal article" date="2010" name="Sci. Signal.">
        <title>Quantitative phosphoproteomics reveals widespread full phosphorylation site occupancy during mitosis.</title>
        <authorList>
            <person name="Olsen J.V."/>
            <person name="Vermeulen M."/>
            <person name="Santamaria A."/>
            <person name="Kumar C."/>
            <person name="Miller M.L."/>
            <person name="Jensen L.J."/>
            <person name="Gnad F."/>
            <person name="Cox J."/>
            <person name="Jensen T.S."/>
            <person name="Nigg E.A."/>
            <person name="Brunak S."/>
            <person name="Mann M."/>
        </authorList>
    </citation>
    <scope>PHOSPHORYLATION [LARGE SCALE ANALYSIS] AT SER-263; SER-272; THR-609 AND SER-616</scope>
    <scope>IDENTIFICATION BY MASS SPECTROMETRY [LARGE SCALE ANALYSIS]</scope>
    <source>
        <tissue>Cervix carcinoma</tissue>
    </source>
</reference>
<reference key="15">
    <citation type="journal article" date="2011" name="Mol. Cell. Proteomics">
        <title>Interaction proteomics analysis of polycomb proteins defines distinct PRC1 Complexes in mammalian cells.</title>
        <authorList>
            <person name="Vandamme J."/>
            <person name="Volkel P."/>
            <person name="Rosnoblet C."/>
            <person name="Le Faou P."/>
            <person name="Angrand P.O."/>
        </authorList>
    </citation>
    <scope>IDENTIFICATION IN A PRC1-LIKE COMPLEX</scope>
    <scope>SUBCELLULAR LOCATION</scope>
</reference>
<reference key="16">
    <citation type="journal article" date="2013" name="J. Proteome Res.">
        <title>Toward a comprehensive characterization of a human cancer cell phosphoproteome.</title>
        <authorList>
            <person name="Zhou H."/>
            <person name="Di Palma S."/>
            <person name="Preisinger C."/>
            <person name="Peng M."/>
            <person name="Polat A.N."/>
            <person name="Heck A.J."/>
            <person name="Mohammed S."/>
        </authorList>
    </citation>
    <scope>PHOSPHORYLATION [LARGE SCALE ANALYSIS] AT SER-263; SER-272; SER-315; THR-609 AND SER-616</scope>
    <scope>IDENTIFICATION BY MASS SPECTROMETRY [LARGE SCALE ANALYSIS]</scope>
    <source>
        <tissue>Cervix carcinoma</tissue>
        <tissue>Erythroleukemia</tissue>
    </source>
</reference>
<reference key="17">
    <citation type="journal article" date="2014" name="J. Proteomics">
        <title>An enzyme assisted RP-RPLC approach for in-depth analysis of human liver phosphoproteome.</title>
        <authorList>
            <person name="Bian Y."/>
            <person name="Song C."/>
            <person name="Cheng K."/>
            <person name="Dong M."/>
            <person name="Wang F."/>
            <person name="Huang J."/>
            <person name="Sun D."/>
            <person name="Wang L."/>
            <person name="Ye M."/>
            <person name="Zou H."/>
        </authorList>
    </citation>
    <scope>PHOSPHORYLATION [LARGE SCALE ANALYSIS] AT THR-609; THR-614; SER-761 AND SER-762</scope>
    <scope>IDENTIFICATION BY MASS SPECTROMETRY [LARGE SCALE ANALYSIS]</scope>
    <source>
        <tissue>Liver</tissue>
    </source>
</reference>
<reference key="18">
    <citation type="journal article" date="2017" name="Nat. Struct. Mol. Biol.">
        <title>Site-specific mapping of the human SUMO proteome reveals co-modification with phosphorylation.</title>
        <authorList>
            <person name="Hendriks I.A."/>
            <person name="Lyon D."/>
            <person name="Young C."/>
            <person name="Jensen L.J."/>
            <person name="Vertegaal A.C."/>
            <person name="Nielsen M.L."/>
        </authorList>
    </citation>
    <scope>SUMOYLATION [LARGE SCALE ANALYSIS] AT LYS-691; LYS-732 AND LYS-810</scope>
    <scope>IDENTIFICATION BY MASS SPECTROMETRY [LARGE SCALE ANALYSIS]</scope>
</reference>
<comment type="function">
    <text evidence="4">Component of a Polycomb group (PcG) multiprotein PRC1-like complex, a complex class required to maintain the transcriptionally repressive state of many genes, including Hox genes, throughout development. PcG PRC1 complex acts via chromatin remodeling and modification of histones; it mediates monoubiquitination of histone H2A 'Lys-119', rendering chromatin heritably changed in its expressibility.</text>
</comment>
<comment type="subunit">
    <text evidence="4 5 6">Component of a PRC1-like complex.</text>
</comment>
<comment type="interaction">
    <interactant intactId="EBI-1223801">
        <id>Q8NDX5</id>
    </interactant>
    <interactant intactId="EBI-539828">
        <id>O15294</id>
        <label>OGT</label>
    </interactant>
    <organismsDiffer>false</organismsDiffer>
    <experiments>3</experiments>
</comment>
<comment type="interaction">
    <interactant intactId="EBI-12910528">
        <id>Q8NDX5-7</id>
    </interactant>
    <interactant intactId="EBI-712648">
        <id>O95994</id>
        <label>AGR2</label>
    </interactant>
    <organismsDiffer>false</organismsDiffer>
    <experiments>5</experiments>
</comment>
<comment type="subcellular location">
    <subcellularLocation>
        <location evidence="4 6">Nucleus</location>
    </subcellularLocation>
</comment>
<comment type="alternative products">
    <event type="alternative splicing"/>
    <isoform>
        <id>Q8NDX5-1</id>
        <name>1</name>
        <sequence type="displayed"/>
    </isoform>
    <isoform>
        <id>Q8NDX5-2</id>
        <name>2</name>
        <sequence type="described" ref="VSP_016765"/>
    </isoform>
    <isoform>
        <id>Q8NDX5-3</id>
        <name>3</name>
        <sequence type="described" ref="VSP_016763 VSP_016770 VSP_016771"/>
    </isoform>
    <isoform>
        <id>Q8NDX5-4</id>
        <name>4</name>
        <sequence type="described" ref="VSP_016764 VSP_016768 VSP_016769"/>
    </isoform>
    <isoform>
        <id>Q8NDX5-5</id>
        <name>5</name>
        <sequence type="described" ref="VSP_016763 VSP_016766 VSP_016767"/>
    </isoform>
    <isoform>
        <id>Q8NDX5-6</id>
        <name>6</name>
        <sequence type="described" ref="VSP_016764 VSP_016766 VSP_016767"/>
    </isoform>
    <isoform>
        <id>Q8NDX5-7</id>
        <name>7</name>
        <sequence type="described" ref="VSP_016763"/>
    </isoform>
</comment>
<comment type="miscellaneous">
    <text>The hPRC-H complex purification reported by PubMed:12167701 probably presents a mixture of different PRC1-like complexes.</text>
</comment>
<comment type="sequence caution" evidence="11">
    <molecule>Isoform 5</molecule>
    <conflict type="frameshift">
        <sequence resource="EMBL-CDS" id="BAB14245"/>
    </conflict>
</comment>
<accession>Q8NDX5</accession>
<accession>A2RRP9</accession>
<accession>Q5HYF0</accession>
<accession>Q6NSG2</accession>
<accession>Q8NFT7</accession>
<accession>Q8NFZ1</accession>
<accession>Q8TBM2</accession>
<accession>Q9H971</accession>
<accession>Q9H9I4</accession>
<proteinExistence type="evidence at protein level"/>
<keyword id="KW-0002">3D-structure</keyword>
<keyword id="KW-0025">Alternative splicing</keyword>
<keyword id="KW-0217">Developmental protein</keyword>
<keyword id="KW-0238">DNA-binding</keyword>
<keyword id="KW-1017">Isopeptide bond</keyword>
<keyword id="KW-0479">Metal-binding</keyword>
<keyword id="KW-0539">Nucleus</keyword>
<keyword id="KW-0597">Phosphoprotein</keyword>
<keyword id="KW-1267">Proteomics identification</keyword>
<keyword id="KW-1185">Reference proteome</keyword>
<keyword id="KW-0832">Ubl conjugation</keyword>
<keyword id="KW-0862">Zinc</keyword>
<keyword id="KW-0863">Zinc-finger</keyword>
<organism>
    <name type="scientific">Homo sapiens</name>
    <name type="common">Human</name>
    <dbReference type="NCBI Taxonomy" id="9606"/>
    <lineage>
        <taxon>Eukaryota</taxon>
        <taxon>Metazoa</taxon>
        <taxon>Chordata</taxon>
        <taxon>Craniata</taxon>
        <taxon>Vertebrata</taxon>
        <taxon>Euteleostomi</taxon>
        <taxon>Mammalia</taxon>
        <taxon>Eutheria</taxon>
        <taxon>Euarchontoglires</taxon>
        <taxon>Primates</taxon>
        <taxon>Haplorrhini</taxon>
        <taxon>Catarrhini</taxon>
        <taxon>Hominidae</taxon>
        <taxon>Homo</taxon>
    </lineage>
</organism>
<dbReference type="EMBL" id="AJ320486">
    <property type="protein sequence ID" value="CAC86587.2"/>
    <property type="molecule type" value="mRNA"/>
</dbReference>
<dbReference type="EMBL" id="AF444193">
    <property type="protein sequence ID" value="AAM51781.1"/>
    <property type="molecule type" value="mRNA"/>
</dbReference>
<dbReference type="EMBL" id="AF380154">
    <property type="protein sequence ID" value="AAM46139.1"/>
    <property type="molecule type" value="mRNA"/>
</dbReference>
<dbReference type="EMBL" id="AK022791">
    <property type="protein sequence ID" value="BAB14245.1"/>
    <property type="status" value="ALT_FRAME"/>
    <property type="molecule type" value="mRNA"/>
</dbReference>
<dbReference type="EMBL" id="AK023029">
    <property type="protein sequence ID" value="BAB14365.1"/>
    <property type="molecule type" value="mRNA"/>
</dbReference>
<dbReference type="EMBL" id="BX647868">
    <property type="protein sequence ID" value="CAI46090.1"/>
    <property type="molecule type" value="mRNA"/>
</dbReference>
<dbReference type="EMBL" id="EF560717">
    <property type="status" value="NOT_ANNOTATED_CDS"/>
    <property type="molecule type" value="mRNA"/>
</dbReference>
<dbReference type="EMBL" id="AC008040">
    <property type="status" value="NOT_ANNOTATED_CDS"/>
    <property type="molecule type" value="Genomic_DNA"/>
</dbReference>
<dbReference type="EMBL" id="AC023891">
    <property type="status" value="NOT_ANNOTATED_CDS"/>
    <property type="molecule type" value="Genomic_DNA"/>
</dbReference>
<dbReference type="EMBL" id="CH471052">
    <property type="protein sequence ID" value="EAW78519.1"/>
    <property type="molecule type" value="Genomic_DNA"/>
</dbReference>
<dbReference type="EMBL" id="BC022325">
    <property type="protein sequence ID" value="AAH22325.1"/>
    <property type="molecule type" value="mRNA"/>
</dbReference>
<dbReference type="EMBL" id="BC070164">
    <property type="protein sequence ID" value="AAH70164.1"/>
    <property type="molecule type" value="mRNA"/>
</dbReference>
<dbReference type="EMBL" id="BC131772">
    <property type="protein sequence ID" value="AAI31773.1"/>
    <property type="molecule type" value="mRNA"/>
</dbReference>
<dbReference type="CCDS" id="CCDS46952.1">
    <molecule id="Q8NDX5-7"/>
</dbReference>
<dbReference type="CCDS" id="CCDS77858.1">
    <molecule id="Q8NDX5-1"/>
</dbReference>
<dbReference type="RefSeq" id="NP_001295045.1">
    <molecule id="Q8NDX5-1"/>
    <property type="nucleotide sequence ID" value="NM_001308116.2"/>
</dbReference>
<dbReference type="RefSeq" id="NP_079223.3">
    <molecule id="Q8NDX5-7"/>
    <property type="nucleotide sequence ID" value="NM_024947.3"/>
</dbReference>
<dbReference type="PDB" id="4PZN">
    <property type="method" value="X-ray"/>
    <property type="resolution" value="2.30 A"/>
    <property type="chains" value="A/B/C/D/E=914-983"/>
</dbReference>
<dbReference type="PDB" id="4PZO">
    <property type="method" value="X-ray"/>
    <property type="resolution" value="2.25 A"/>
    <property type="chains" value="A/B/C/D/E/F=914-983"/>
</dbReference>
<dbReference type="PDBsum" id="4PZN"/>
<dbReference type="PDBsum" id="4PZO"/>
<dbReference type="SMR" id="Q8NDX5"/>
<dbReference type="BioGRID" id="123068">
    <property type="interactions" value="97"/>
</dbReference>
<dbReference type="ComplexPortal" id="CPX-2480">
    <property type="entry name" value="Polycomb repressive complex 1, RING1-PCGF2-CBX2-PHC3 variant"/>
</dbReference>
<dbReference type="ComplexPortal" id="CPX-2598">
    <property type="entry name" value="Polycomb repressive complex 1, RING1-PCGF2-CBX6-PHC3 variant"/>
</dbReference>
<dbReference type="ComplexPortal" id="CPX-2615">
    <property type="entry name" value="Polycomb repressive complex 1, RING1-PCGF2-CBX4-PHC3 variant"/>
</dbReference>
<dbReference type="ComplexPortal" id="CPX-2619">
    <property type="entry name" value="Polycomb repressive complex 1, RING1-PCGF2-CBX7-PHC3 variant"/>
</dbReference>
<dbReference type="ComplexPortal" id="CPX-2623">
    <property type="entry name" value="Polycomb repressive complex 1, RING1-PCGF2-CBX8-PHC3 variant"/>
</dbReference>
<dbReference type="ComplexPortal" id="CPX-7504">
    <property type="entry name" value="Polycomb repressive complex 1, RING1-PCGF4-CBX2-PHC3 variant"/>
</dbReference>
<dbReference type="ComplexPortal" id="CPX-7508">
    <property type="entry name" value="Polycomb repressive complex 1, RING1-PCGF4-CBX4-PHC3 variant"/>
</dbReference>
<dbReference type="ComplexPortal" id="CPX-7511">
    <property type="entry name" value="Polycomb repressive complex 1, RING1-PCGF4-CBX6-PHC3 variant"/>
</dbReference>
<dbReference type="ComplexPortal" id="CPX-7515">
    <property type="entry name" value="Polycomb repressive complex 1, RING1-PCGF4-CBX7-PHC3 variant"/>
</dbReference>
<dbReference type="ComplexPortal" id="CPX-7518">
    <property type="entry name" value="Polycomb repressive complex 1, RING1-PCGF4-CBX8-PHC3 variant"/>
</dbReference>
<dbReference type="ComplexPortal" id="CPX-7523">
    <property type="entry name" value="Polycomb repressive complex 1, RING2-PCGF2-CBX2-PHC3 variant"/>
</dbReference>
<dbReference type="ComplexPortal" id="CPX-7525">
    <property type="entry name" value="Polycomb repressive complex 1, RING2-PCGF2-CBX4-PHC3 variant"/>
</dbReference>
<dbReference type="ComplexPortal" id="CPX-7529">
    <property type="entry name" value="Polycomb repressive complex 1, RING2-PCGF2-CBX6-PHC3 variant"/>
</dbReference>
<dbReference type="ComplexPortal" id="CPX-7532">
    <property type="entry name" value="Polycomb repressive complex 1, RING2-PCGF2-CBX7-PHC3 variant"/>
</dbReference>
<dbReference type="ComplexPortal" id="CPX-7535">
    <property type="entry name" value="Polycomb repressive complex 1, RING2-PCGF2-CBX8-PHC3 variant"/>
</dbReference>
<dbReference type="ComplexPortal" id="CPX-7544">
    <property type="entry name" value="Polycomb repressive complex 1, RING2-PCGF4-CBX2-PHC3 variant"/>
</dbReference>
<dbReference type="ComplexPortal" id="CPX-7547">
    <property type="entry name" value="Polycomb repressive complex 1, RING2-PCGF4-CBX4-PHC3 variant"/>
</dbReference>
<dbReference type="ComplexPortal" id="CPX-7550">
    <property type="entry name" value="Polycomb repressive complex 1, RING2-PCGF4-CBX6-PHC3 variant"/>
</dbReference>
<dbReference type="ComplexPortal" id="CPX-7553">
    <property type="entry name" value="Polycomb repressive complex 1, RING2-PCGF4-CBX7-PHC3 variant"/>
</dbReference>
<dbReference type="ComplexPortal" id="CPX-7556">
    <property type="entry name" value="Polycomb repressive complex 1, RING2-PCGF4-CBX8-PHC3 variant"/>
</dbReference>
<dbReference type="CORUM" id="Q8NDX5"/>
<dbReference type="FunCoup" id="Q8NDX5">
    <property type="interactions" value="3340"/>
</dbReference>
<dbReference type="IntAct" id="Q8NDX5">
    <property type="interactions" value="47"/>
</dbReference>
<dbReference type="MINT" id="Q8NDX5"/>
<dbReference type="STRING" id="9606.ENSP00000420294"/>
<dbReference type="GlyConnect" id="2863">
    <property type="glycosylation" value="1 O-GlcNAc glycan (1 site)"/>
</dbReference>
<dbReference type="GlyCosmos" id="Q8NDX5">
    <property type="glycosylation" value="14 sites, 2 glycans"/>
</dbReference>
<dbReference type="GlyGen" id="Q8NDX5">
    <property type="glycosylation" value="25 sites, 1 N-linked glycan (1 site), 2 O-linked glycans (22 sites)"/>
</dbReference>
<dbReference type="iPTMnet" id="Q8NDX5"/>
<dbReference type="PhosphoSitePlus" id="Q8NDX5"/>
<dbReference type="SwissPalm" id="Q8NDX5"/>
<dbReference type="BioMuta" id="PHC3"/>
<dbReference type="DMDM" id="74715388"/>
<dbReference type="jPOST" id="Q8NDX5"/>
<dbReference type="MassIVE" id="Q8NDX5"/>
<dbReference type="PaxDb" id="9606-ENSP00000420294"/>
<dbReference type="PeptideAtlas" id="Q8NDX5"/>
<dbReference type="ProteomicsDB" id="73079">
    <molecule id="Q8NDX5-1"/>
</dbReference>
<dbReference type="ProteomicsDB" id="73080">
    <molecule id="Q8NDX5-2"/>
</dbReference>
<dbReference type="ProteomicsDB" id="73081">
    <molecule id="Q8NDX5-3"/>
</dbReference>
<dbReference type="ProteomicsDB" id="73082">
    <molecule id="Q8NDX5-4"/>
</dbReference>
<dbReference type="ProteomicsDB" id="73083">
    <molecule id="Q8NDX5-5"/>
</dbReference>
<dbReference type="ProteomicsDB" id="73084">
    <molecule id="Q8NDX5-6"/>
</dbReference>
<dbReference type="ProteomicsDB" id="73085">
    <molecule id="Q8NDX5-7"/>
</dbReference>
<dbReference type="Pumba" id="Q8NDX5"/>
<dbReference type="Antibodypedia" id="33708">
    <property type="antibodies" value="111 antibodies from 24 providers"/>
</dbReference>
<dbReference type="DNASU" id="80012"/>
<dbReference type="Ensembl" id="ENST00000494943.5">
    <molecule id="Q8NDX5-1"/>
    <property type="protein sequence ID" value="ENSP00000420271.1"/>
    <property type="gene ID" value="ENSG00000173889.16"/>
</dbReference>
<dbReference type="Ensembl" id="ENST00000495893.7">
    <molecule id="Q8NDX5-7"/>
    <property type="protein sequence ID" value="ENSP00000420294.1"/>
    <property type="gene ID" value="ENSG00000173889.16"/>
</dbReference>
<dbReference type="Ensembl" id="ENST00000497658.5">
    <molecule id="Q8NDX5-5"/>
    <property type="protein sequence ID" value="ENSP00000420454.1"/>
    <property type="gene ID" value="ENSG00000173889.16"/>
</dbReference>
<dbReference type="GeneID" id="80012"/>
<dbReference type="KEGG" id="hsa:80012"/>
<dbReference type="MANE-Select" id="ENST00000495893.7">
    <molecule id="Q8NDX5-7"/>
    <property type="protein sequence ID" value="ENSP00000420294.1"/>
    <property type="RefSeq nucleotide sequence ID" value="NM_024947.4"/>
    <property type="RefSeq protein sequence ID" value="NP_079223.3"/>
</dbReference>
<dbReference type="UCSC" id="uc003fgl.3">
    <molecule id="Q8NDX5-1"/>
    <property type="organism name" value="human"/>
</dbReference>
<dbReference type="AGR" id="HGNC:15682"/>
<dbReference type="CTD" id="80012"/>
<dbReference type="DisGeNET" id="80012"/>
<dbReference type="GeneCards" id="PHC3"/>
<dbReference type="HGNC" id="HGNC:15682">
    <property type="gene designation" value="PHC3"/>
</dbReference>
<dbReference type="HPA" id="ENSG00000173889">
    <property type="expression patterns" value="Tissue enhanced (bone)"/>
</dbReference>
<dbReference type="MIM" id="620031">
    <property type="type" value="gene"/>
</dbReference>
<dbReference type="neXtProt" id="NX_Q8NDX5"/>
<dbReference type="OpenTargets" id="ENSG00000173889"/>
<dbReference type="PharmGKB" id="PA134886018"/>
<dbReference type="VEuPathDB" id="HostDB:ENSG00000173889"/>
<dbReference type="eggNOG" id="ENOG502QS5Q">
    <property type="taxonomic scope" value="Eukaryota"/>
</dbReference>
<dbReference type="GeneTree" id="ENSGT00940000154964"/>
<dbReference type="HOGENOM" id="CLU_012048_0_0_1"/>
<dbReference type="InParanoid" id="Q8NDX5"/>
<dbReference type="OMA" id="DRHAVQX"/>
<dbReference type="OrthoDB" id="2390104at2759"/>
<dbReference type="PAN-GO" id="Q8NDX5">
    <property type="GO annotations" value="5 GO annotations based on evolutionary models"/>
</dbReference>
<dbReference type="PhylomeDB" id="Q8NDX5"/>
<dbReference type="TreeFam" id="TF331299"/>
<dbReference type="PathwayCommons" id="Q8NDX5"/>
<dbReference type="Reactome" id="R-HSA-2559580">
    <property type="pathway name" value="Oxidative Stress Induced Senescence"/>
</dbReference>
<dbReference type="Reactome" id="R-HSA-3108214">
    <property type="pathway name" value="SUMOylation of DNA damage response and repair proteins"/>
</dbReference>
<dbReference type="Reactome" id="R-HSA-3899300">
    <property type="pathway name" value="SUMOylation of transcription cofactors"/>
</dbReference>
<dbReference type="Reactome" id="R-HSA-4551638">
    <property type="pathway name" value="SUMOylation of chromatin organization proteins"/>
</dbReference>
<dbReference type="Reactome" id="R-HSA-4570464">
    <property type="pathway name" value="SUMOylation of RNA binding proteins"/>
</dbReference>
<dbReference type="Reactome" id="R-HSA-4655427">
    <property type="pathway name" value="SUMOylation of DNA methylation proteins"/>
</dbReference>
<dbReference type="Reactome" id="R-HSA-8939243">
    <property type="pathway name" value="RUNX1 interacts with co-factors whose precise effect on RUNX1 targets is not known"/>
</dbReference>
<dbReference type="Reactome" id="R-HSA-8943724">
    <property type="pathway name" value="Regulation of PTEN gene transcription"/>
</dbReference>
<dbReference type="Reactome" id="R-HSA-8953750">
    <property type="pathway name" value="Transcriptional Regulation by E2F6"/>
</dbReference>
<dbReference type="SignaLink" id="Q8NDX5"/>
<dbReference type="BioGRID-ORCS" id="80012">
    <property type="hits" value="15 hits in 1166 CRISPR screens"/>
</dbReference>
<dbReference type="ChiTaRS" id="PHC3">
    <property type="organism name" value="human"/>
</dbReference>
<dbReference type="EvolutionaryTrace" id="Q8NDX5"/>
<dbReference type="GeneWiki" id="PHC3"/>
<dbReference type="GenomeRNAi" id="80012"/>
<dbReference type="Pharos" id="Q8NDX5">
    <property type="development level" value="Tbio"/>
</dbReference>
<dbReference type="PRO" id="PR:Q8NDX5"/>
<dbReference type="Proteomes" id="UP000005640">
    <property type="component" value="Chromosome 3"/>
</dbReference>
<dbReference type="RNAct" id="Q8NDX5">
    <property type="molecule type" value="protein"/>
</dbReference>
<dbReference type="Bgee" id="ENSG00000173889">
    <property type="expression patterns" value="Expressed in endothelial cell and 192 other cell types or tissues"/>
</dbReference>
<dbReference type="ExpressionAtlas" id="Q8NDX5">
    <property type="expression patterns" value="baseline and differential"/>
</dbReference>
<dbReference type="GO" id="GO:0005654">
    <property type="term" value="C:nucleoplasm"/>
    <property type="evidence" value="ECO:0000314"/>
    <property type="project" value="HPA"/>
</dbReference>
<dbReference type="GO" id="GO:0005634">
    <property type="term" value="C:nucleus"/>
    <property type="evidence" value="ECO:0000314"/>
    <property type="project" value="UniProtKB"/>
</dbReference>
<dbReference type="GO" id="GO:0031519">
    <property type="term" value="C:PcG protein complex"/>
    <property type="evidence" value="ECO:0000314"/>
    <property type="project" value="UniProtKB"/>
</dbReference>
<dbReference type="GO" id="GO:0035102">
    <property type="term" value="C:PRC1 complex"/>
    <property type="evidence" value="ECO:0000314"/>
    <property type="project" value="UniProtKB"/>
</dbReference>
<dbReference type="GO" id="GO:0003682">
    <property type="term" value="F:chromatin binding"/>
    <property type="evidence" value="ECO:0000318"/>
    <property type="project" value="GO_Central"/>
</dbReference>
<dbReference type="GO" id="GO:0003677">
    <property type="term" value="F:DNA binding"/>
    <property type="evidence" value="ECO:0007669"/>
    <property type="project" value="UniProtKB-KW"/>
</dbReference>
<dbReference type="GO" id="GO:0042393">
    <property type="term" value="F:histone binding"/>
    <property type="evidence" value="ECO:0000318"/>
    <property type="project" value="GO_Central"/>
</dbReference>
<dbReference type="GO" id="GO:0008270">
    <property type="term" value="F:zinc ion binding"/>
    <property type="evidence" value="ECO:0007669"/>
    <property type="project" value="UniProtKB-KW"/>
</dbReference>
<dbReference type="GO" id="GO:0045892">
    <property type="term" value="P:negative regulation of DNA-templated transcription"/>
    <property type="evidence" value="ECO:0000318"/>
    <property type="project" value="GO_Central"/>
</dbReference>
<dbReference type="CDD" id="cd09577">
    <property type="entry name" value="SAM_Ph1_2_3"/>
    <property type="match status" value="1"/>
</dbReference>
<dbReference type="FunFam" id="1.10.150.50:FF:000011">
    <property type="entry name" value="Polyhomeotic-like protein 2 isoform 1"/>
    <property type="match status" value="1"/>
</dbReference>
<dbReference type="FunFam" id="3.30.60.160:FF:000002">
    <property type="entry name" value="Polyhomeotic-like protein 2 isoform 1"/>
    <property type="match status" value="1"/>
</dbReference>
<dbReference type="Gene3D" id="3.30.60.160">
    <property type="match status" value="1"/>
</dbReference>
<dbReference type="Gene3D" id="1.10.150.50">
    <property type="entry name" value="Transcription Factor, Ets-1"/>
    <property type="match status" value="1"/>
</dbReference>
<dbReference type="InterPro" id="IPR050548">
    <property type="entry name" value="PcG_chromatin_remod_factors"/>
</dbReference>
<dbReference type="InterPro" id="IPR001660">
    <property type="entry name" value="SAM"/>
</dbReference>
<dbReference type="InterPro" id="IPR013761">
    <property type="entry name" value="SAM/pointed_sf"/>
</dbReference>
<dbReference type="InterPro" id="IPR012313">
    <property type="entry name" value="Znf_FCS"/>
</dbReference>
<dbReference type="InterPro" id="IPR038603">
    <property type="entry name" value="Znf_FCS_sf"/>
</dbReference>
<dbReference type="PANTHER" id="PTHR12247">
    <property type="entry name" value="POLYCOMB GROUP PROTEIN"/>
    <property type="match status" value="1"/>
</dbReference>
<dbReference type="PANTHER" id="PTHR12247:SF88">
    <property type="entry name" value="POLYHOMEOTIC-LIKE PROTEIN 3"/>
    <property type="match status" value="1"/>
</dbReference>
<dbReference type="Pfam" id="PF00536">
    <property type="entry name" value="SAM_1"/>
    <property type="match status" value="1"/>
</dbReference>
<dbReference type="Pfam" id="PF21319">
    <property type="entry name" value="zf-FCS_1"/>
    <property type="match status" value="1"/>
</dbReference>
<dbReference type="SMART" id="SM00454">
    <property type="entry name" value="SAM"/>
    <property type="match status" value="1"/>
</dbReference>
<dbReference type="SUPFAM" id="SSF47769">
    <property type="entry name" value="SAM/Pointed domain"/>
    <property type="match status" value="1"/>
</dbReference>
<dbReference type="PROSITE" id="PS50105">
    <property type="entry name" value="SAM_DOMAIN"/>
    <property type="match status" value="1"/>
</dbReference>
<dbReference type="PROSITE" id="PS51024">
    <property type="entry name" value="ZF_FCS"/>
    <property type="match status" value="1"/>
</dbReference>